<name>CAS1_ECOLI</name>
<accession>Q46896</accession>
<accession>Q2MA74</accession>
<organism>
    <name type="scientific">Escherichia coli (strain K12)</name>
    <dbReference type="NCBI Taxonomy" id="83333"/>
    <lineage>
        <taxon>Bacteria</taxon>
        <taxon>Pseudomonadati</taxon>
        <taxon>Pseudomonadota</taxon>
        <taxon>Gammaproteobacteria</taxon>
        <taxon>Enterobacterales</taxon>
        <taxon>Enterobacteriaceae</taxon>
        <taxon>Escherichia</taxon>
    </lineage>
</organism>
<dbReference type="EC" id="3.1.-.-"/>
<dbReference type="EMBL" id="U29579">
    <property type="protein sequence ID" value="AAA69265.1"/>
    <property type="molecule type" value="Genomic_DNA"/>
</dbReference>
<dbReference type="EMBL" id="U00096">
    <property type="protein sequence ID" value="AAC75797.1"/>
    <property type="molecule type" value="Genomic_DNA"/>
</dbReference>
<dbReference type="EMBL" id="AP009048">
    <property type="protein sequence ID" value="BAE76832.1"/>
    <property type="molecule type" value="Genomic_DNA"/>
</dbReference>
<dbReference type="PIR" id="G65056">
    <property type="entry name" value="G65056"/>
</dbReference>
<dbReference type="RefSeq" id="NP_417235.1">
    <property type="nucleotide sequence ID" value="NC_000913.3"/>
</dbReference>
<dbReference type="PDB" id="3NKD">
    <property type="method" value="X-ray"/>
    <property type="resolution" value="1.95 A"/>
    <property type="chains" value="A/B=1-305"/>
</dbReference>
<dbReference type="PDB" id="3NKE">
    <property type="method" value="X-ray"/>
    <property type="resolution" value="1.40 A"/>
    <property type="chains" value="A/B/C=92-291"/>
</dbReference>
<dbReference type="PDB" id="4P6I">
    <property type="method" value="X-ray"/>
    <property type="resolution" value="2.30 A"/>
    <property type="chains" value="C/D/E/F=1-305"/>
</dbReference>
<dbReference type="PDB" id="4QDL">
    <property type="method" value="X-ray"/>
    <property type="resolution" value="2.70 A"/>
    <property type="chains" value="A/B/C/D=1-305"/>
</dbReference>
<dbReference type="PDB" id="5DLJ">
    <property type="method" value="X-ray"/>
    <property type="resolution" value="2.60 A"/>
    <property type="chains" value="A/B/C/D=2-281"/>
</dbReference>
<dbReference type="PDB" id="5DQT">
    <property type="method" value="X-ray"/>
    <property type="resolution" value="3.10 A"/>
    <property type="chains" value="A/B/C/D/I/J/K/L=1-305"/>
</dbReference>
<dbReference type="PDB" id="5DQU">
    <property type="method" value="X-ray"/>
    <property type="resolution" value="4.50 A"/>
    <property type="chains" value="A/B/C/D=1-305"/>
</dbReference>
<dbReference type="PDB" id="5DQZ">
    <property type="method" value="X-ray"/>
    <property type="resolution" value="2.70 A"/>
    <property type="chains" value="A/B/C/D=1-305"/>
</dbReference>
<dbReference type="PDB" id="5DS4">
    <property type="method" value="X-ray"/>
    <property type="resolution" value="3.20 A"/>
    <property type="chains" value="A/B/C/D=1-305"/>
</dbReference>
<dbReference type="PDB" id="5DS5">
    <property type="method" value="X-ray"/>
    <property type="resolution" value="2.95 A"/>
    <property type="chains" value="A/B/C/D=1-305"/>
</dbReference>
<dbReference type="PDB" id="5DS6">
    <property type="method" value="X-ray"/>
    <property type="resolution" value="3.35 A"/>
    <property type="chains" value="A/B/C/D=1-305"/>
</dbReference>
<dbReference type="PDB" id="5VVJ">
    <property type="method" value="X-ray"/>
    <property type="resolution" value="3.89 A"/>
    <property type="chains" value="A/B/C/D=1-305"/>
</dbReference>
<dbReference type="PDB" id="5VVK">
    <property type="method" value="X-ray"/>
    <property type="resolution" value="2.90 A"/>
    <property type="chains" value="A/B/C/D=1-305"/>
</dbReference>
<dbReference type="PDB" id="5VVL">
    <property type="method" value="X-ray"/>
    <property type="resolution" value="3.31 A"/>
    <property type="chains" value="A/B/C/D=1-305"/>
</dbReference>
<dbReference type="PDB" id="5WFE">
    <property type="method" value="EM"/>
    <property type="resolution" value="3.64 A"/>
    <property type="chains" value="A/B/C/D=1-305"/>
</dbReference>
<dbReference type="PDBsum" id="3NKD"/>
<dbReference type="PDBsum" id="3NKE"/>
<dbReference type="PDBsum" id="4P6I"/>
<dbReference type="PDBsum" id="4QDL"/>
<dbReference type="PDBsum" id="5DLJ"/>
<dbReference type="PDBsum" id="5DQT"/>
<dbReference type="PDBsum" id="5DQU"/>
<dbReference type="PDBsum" id="5DQZ"/>
<dbReference type="PDBsum" id="5DS4"/>
<dbReference type="PDBsum" id="5DS5"/>
<dbReference type="PDBsum" id="5DS6"/>
<dbReference type="PDBsum" id="5VVJ"/>
<dbReference type="PDBsum" id="5VVK"/>
<dbReference type="PDBsum" id="5VVL"/>
<dbReference type="PDBsum" id="5WFE"/>
<dbReference type="EMDB" id="EMD-8827"/>
<dbReference type="SMR" id="Q46896"/>
<dbReference type="BioGRID" id="4261582">
    <property type="interactions" value="282"/>
</dbReference>
<dbReference type="BioGRID" id="851560">
    <property type="interactions" value="13"/>
</dbReference>
<dbReference type="ComplexPortal" id="CPX-996">
    <property type="entry name" value="Cas1-Cas2 complex"/>
</dbReference>
<dbReference type="DIP" id="DIP-12118N"/>
<dbReference type="FunCoup" id="Q46896">
    <property type="interactions" value="65"/>
</dbReference>
<dbReference type="IntAct" id="Q46896">
    <property type="interactions" value="16"/>
</dbReference>
<dbReference type="STRING" id="511145.b2755"/>
<dbReference type="PaxDb" id="511145-b2755"/>
<dbReference type="EnsemblBacteria" id="AAC75797">
    <property type="protein sequence ID" value="AAC75797"/>
    <property type="gene ID" value="b2755"/>
</dbReference>
<dbReference type="GeneID" id="947228"/>
<dbReference type="KEGG" id="ecj:JW2725"/>
<dbReference type="KEGG" id="eco:b2755"/>
<dbReference type="KEGG" id="ecoc:C3026_15145"/>
<dbReference type="PATRIC" id="fig|1411691.4.peg.3983"/>
<dbReference type="EchoBASE" id="EB2915"/>
<dbReference type="eggNOG" id="COG1518">
    <property type="taxonomic scope" value="Bacteria"/>
</dbReference>
<dbReference type="HOGENOM" id="CLU_077904_1_0_6"/>
<dbReference type="InParanoid" id="Q46896"/>
<dbReference type="OMA" id="IWVGEAG"/>
<dbReference type="OrthoDB" id="9777847at2"/>
<dbReference type="PhylomeDB" id="Q46896"/>
<dbReference type="BioCyc" id="EcoCyc:G7425-MONOMER"/>
<dbReference type="EvolutionaryTrace" id="Q46896"/>
<dbReference type="PRO" id="PR:Q46896"/>
<dbReference type="Proteomes" id="UP000000625">
    <property type="component" value="Chromosome"/>
</dbReference>
<dbReference type="GO" id="GO:0005737">
    <property type="term" value="C:cytoplasm"/>
    <property type="evidence" value="ECO:0007669"/>
    <property type="project" value="UniProtKB-SubCell"/>
</dbReference>
<dbReference type="GO" id="GO:0017108">
    <property type="term" value="F:5'-flap endonuclease activity"/>
    <property type="evidence" value="ECO:0000314"/>
    <property type="project" value="EcoCyc"/>
</dbReference>
<dbReference type="GO" id="GO:0008821">
    <property type="term" value="F:crossover junction DNA endonuclease activity"/>
    <property type="evidence" value="ECO:0000314"/>
    <property type="project" value="EcoCyc"/>
</dbReference>
<dbReference type="GO" id="GO:0003677">
    <property type="term" value="F:DNA binding"/>
    <property type="evidence" value="ECO:0007669"/>
    <property type="project" value="UniProtKB-KW"/>
</dbReference>
<dbReference type="GO" id="GO:0004519">
    <property type="term" value="F:endonuclease activity"/>
    <property type="evidence" value="ECO:0000318"/>
    <property type="project" value="GO_Central"/>
</dbReference>
<dbReference type="GO" id="GO:0042802">
    <property type="term" value="F:identical protein binding"/>
    <property type="evidence" value="ECO:0000353"/>
    <property type="project" value="IntAct"/>
</dbReference>
<dbReference type="GO" id="GO:0046872">
    <property type="term" value="F:metal ion binding"/>
    <property type="evidence" value="ECO:0007669"/>
    <property type="project" value="UniProtKB-UniRule"/>
</dbReference>
<dbReference type="GO" id="GO:0042803">
    <property type="term" value="F:protein homodimerization activity"/>
    <property type="evidence" value="ECO:0000314"/>
    <property type="project" value="EcoCyc"/>
</dbReference>
<dbReference type="GO" id="GO:0099048">
    <property type="term" value="P:CRISPR-cas system"/>
    <property type="evidence" value="ECO:0000314"/>
    <property type="project" value="ComplexPortal"/>
</dbReference>
<dbReference type="GO" id="GO:0051607">
    <property type="term" value="P:defense response to virus"/>
    <property type="evidence" value="ECO:0007669"/>
    <property type="project" value="UniProtKB-UniRule"/>
</dbReference>
<dbReference type="GO" id="GO:0006974">
    <property type="term" value="P:DNA damage response"/>
    <property type="evidence" value="ECO:0000315"/>
    <property type="project" value="EcoCyc"/>
</dbReference>
<dbReference type="GO" id="GO:0006281">
    <property type="term" value="P:DNA repair"/>
    <property type="evidence" value="ECO:0007669"/>
    <property type="project" value="UniProtKB-KW"/>
</dbReference>
<dbReference type="GO" id="GO:0043571">
    <property type="term" value="P:maintenance of CRISPR repeat elements"/>
    <property type="evidence" value="ECO:0000314"/>
    <property type="project" value="ComplexPortal"/>
</dbReference>
<dbReference type="CDD" id="cd09719">
    <property type="entry name" value="Cas1_I-E"/>
    <property type="match status" value="1"/>
</dbReference>
<dbReference type="FunFam" id="1.20.120.920:FF:000003">
    <property type="entry name" value="CRISPR-associated endonuclease Cas1"/>
    <property type="match status" value="1"/>
</dbReference>
<dbReference type="FunFam" id="3.100.10.20:FF:000001">
    <property type="entry name" value="CRISPR-associated endonuclease Cas1"/>
    <property type="match status" value="1"/>
</dbReference>
<dbReference type="Gene3D" id="1.20.120.920">
    <property type="entry name" value="CRISPR-associated endonuclease Cas1, C-terminal domain"/>
    <property type="match status" value="1"/>
</dbReference>
<dbReference type="Gene3D" id="3.100.10.20">
    <property type="entry name" value="CRISPR-associated endonuclease Cas1, N-terminal domain"/>
    <property type="match status" value="1"/>
</dbReference>
<dbReference type="HAMAP" id="MF_01470">
    <property type="entry name" value="Cas1"/>
    <property type="match status" value="1"/>
</dbReference>
<dbReference type="InterPro" id="IPR050646">
    <property type="entry name" value="Cas1"/>
</dbReference>
<dbReference type="InterPro" id="IPR033641">
    <property type="entry name" value="Cas1_I-E"/>
</dbReference>
<dbReference type="InterPro" id="IPR002729">
    <property type="entry name" value="CRISPR-assoc_Cas1"/>
</dbReference>
<dbReference type="InterPro" id="IPR042206">
    <property type="entry name" value="CRISPR-assoc_Cas1_C"/>
</dbReference>
<dbReference type="InterPro" id="IPR019851">
    <property type="entry name" value="CRISPR-assoc_Cas1_ECOLI"/>
</dbReference>
<dbReference type="InterPro" id="IPR042211">
    <property type="entry name" value="CRISPR-assoc_Cas1_N"/>
</dbReference>
<dbReference type="NCBIfam" id="TIGR00287">
    <property type="entry name" value="cas1"/>
    <property type="match status" value="2"/>
</dbReference>
<dbReference type="NCBIfam" id="TIGR03638">
    <property type="entry name" value="cas1_ECOLI"/>
    <property type="match status" value="1"/>
</dbReference>
<dbReference type="PANTHER" id="PTHR34353:SF3">
    <property type="entry name" value="CRISPR-ASSOCIATED ENDONUCLEASE CAS1"/>
    <property type="match status" value="1"/>
</dbReference>
<dbReference type="PANTHER" id="PTHR34353">
    <property type="entry name" value="CRISPR-ASSOCIATED ENDONUCLEASE CAS1 1"/>
    <property type="match status" value="1"/>
</dbReference>
<dbReference type="Pfam" id="PF01867">
    <property type="entry name" value="Cas_Cas1"/>
    <property type="match status" value="1"/>
</dbReference>
<comment type="function">
    <text evidence="4 5 6 7 8 9 10">CRISPR (clustered regularly interspaced short palindromic repeat), is an adaptive immune system that provides protection against mobile genetic elements (viruses, transposable elements and conjugative plasmids) (PubMed:21255106, PubMed:24793649, PubMed:24920831). CRISPR clusters contain sequences complementary to antecedent mobile elements and target invading nucleic acids. CRISPR clusters are transcribed and processed into CRISPR RNA (crRNA). The Cas1-Cas2 complex is involved in CRISPR adaptation, the first stage of CRISPR immunity, being required for the addition/removal of CRISPR spacers at the leader end of the CRISPR locus (PubMed:24793649, PubMed:24920831, PubMed:25707795). The Cas1-Cas2 complex introduces staggered nicks into both strands of the CRISPR array near the leader repeat and joins the 5'-ends of the repeat strands with the 3'-ends of the new spacer sequence (PubMed:24920831). Spacer DNA integration requires supercoiled target DNA and 3'-OH ends on the inserted (spacer) DNA and probably initiates with a nucleophilic attack of the C 3'-OH end of the protospacer on the minus strand of the first repeat sequence (PubMed:25707795). Expression of Cas1-Cas2 in a strain lacking both genes permits spacer acquisition (PubMed:24793649, PubMed:24920831). Non-specifically binds DNA; the Cas1-Cas2 complex preferentially binds CRISPR-locus DNA (PubMed:24793649). Highest binding is seen to a dual forked DNA complex with 3'-overhangs and a protospacer-adjacent motif-complement specifically positioned (PubMed:26478180). The protospacer DNA lies across a flat surface extending from 1 Cas1 dimer, across the Cas2 dimer and contacting the other Cas1 dimer; the 23 bp-long ds section of the DNA is bracketed by 1 Tyr-22 from each of the Cas1 dimers (PubMed:26478180, PubMed:26503043). Cas1 cuts within the 3'-overhang, to generate a 33-nucleotide DNA that is probably incorporated into the CRISPR leader by a cut-and-paste mechanism (PubMed:26478180). Cas1 alone endonucleolytically cleaves linear ssRNA, ssDNA and short (34 base) dsDNA as well as branched DNA substrates such as Holliday junctions, replication forks and 5'-flap DNA substrates (PubMed:21219465). In vitro catalyzes a concerted transesterification reaction on branched DNA, as would be expected during integration of protospacers into the CRISPR leader sequence; Cas2 is not required in vitro. This reaction requires a 3'-OH group at the branch point (PubMed:26284603). Genetic interactions suggest Cas1 interacts with components of the RecBC and RuvB DNA repair systems (PubMed:21219465).</text>
</comment>
<comment type="cofactor">
    <cofactor evidence="4 8 9">
        <name>Mg(2+)</name>
        <dbReference type="ChEBI" id="CHEBI:18420"/>
    </cofactor>
    <text evidence="8 9">Protospacer integration in vitro also occurs with Mn(2+) and also requires low concentrations of KCl (PubMed:25707795). The transesterification function works equally well with Mg(2+), Mn(2+) or Co(2+) in vitro (PubMed:26284603).</text>
</comment>
<comment type="activity regulation">
    <text evidence="4">Nuclease activity partially inhibited by CasE (PubMed:21219465).</text>
</comment>
<comment type="subunit">
    <text evidence="4 6 7 8 10 11 14">Homodimer (PubMed:21219465). Part of the Cas1-Cas2 complex (PubMed:24793649, PubMed:24920831, PubMed:25707795, PubMed:26478180, PubMed:26503043, Ref.11). Interacts with RecB, RecC, RuvB, CasC and CasE (PubMed:21219465). Forms a hexamer with 2 Cas1 dimers sandwiching a Cas2 dimer (PubMed:24793649, PubMed:26478180). The DNA lies across a flat surface extending from 1 Cas1 dimer, across the Cas2 dimer and contacting the other Cas1 dimer. Only 1 Cas1 protein from each dimer is catalytic, the other interacts with the Cas2 dimer and possibly target DNA (PubMed:26478180, PubMed:26503043).</text>
</comment>
<comment type="interaction">
    <interactant intactId="EBI-1130209">
        <id>Q46896</id>
    </interactant>
    <interactant intactId="EBI-554869">
        <id>P76339</id>
        <label>hprS</label>
    </interactant>
    <organismsDiffer>false</organismsDiffer>
    <experiments>3</experiments>
</comment>
<comment type="interaction">
    <interactant intactId="EBI-1130209">
        <id>Q46896</id>
    </interactant>
    <interactant intactId="EBI-9150552">
        <id>P45956</id>
        <label>ygbF</label>
    </interactant>
    <organismsDiffer>false</organismsDiffer>
    <experiments>8</experiments>
</comment>
<comment type="interaction">
    <interactant intactId="EBI-1130209">
        <id>Q46896</id>
    </interactant>
    <interactant intactId="EBI-1130209">
        <id>Q46896</id>
        <label>ygbT</label>
    </interactant>
    <organismsDiffer>false</organismsDiffer>
    <experiments>4</experiments>
</comment>
<comment type="subcellular location">
    <subcellularLocation>
        <location evidence="4">Cytoplasm</location>
    </subcellularLocation>
    <text evidence="4">In 15% of cell localizes to discrete nucleoid foci (probable DNA damage sites) upon treatment with mitomycin C (MMC) for 2 hours (PubMed:21219465).</text>
</comment>
<comment type="induction">
    <text evidence="2 3 5">Repressed by H-NS (PubMed:20132443). Activated by LeuO (PubMed:19429622). Activated by the BaeSR two-component regulatory system, possibly due to envelope stress (PubMed:21255106). Part of the casABCDE-ygbT-ygbF operon (PubMed:19429622).</text>
</comment>
<comment type="domain">
    <text evidence="10">Substrate DNA-binding induces large structural changes that generate a surface for DNA-binding across the Cas2 dimer and formation of an optimal catalytic site (PubMed:26478180).</text>
</comment>
<comment type="disruption phenotype">
    <text evidence="4 5">Not essential. Increased sensitivity to MMC and UV light; double ygbT-ruvA, ruvB or ruvC disruptions have no further phenotype suggesting Cas1 functions in the same DNA repair pathway (PubMed:21219465). Function in DNA repair also seems to require CRISPRs (PubMed:21219465). Cells elongate after 2 hours growth in MMC; they are even longer in double ygbT-ruvA, ruvB or ruvC disruptions, suggesting Cas1 may also function in chromosome segregation (PubMed:21219465). Loss of plasmid silencing (PubMed:21255106).</text>
</comment>
<comment type="similarity">
    <text evidence="12">Belongs to the CRISPR-associated endonuclease Cas1 family.</text>
</comment>
<keyword id="KW-0002">3D-structure</keyword>
<keyword id="KW-0051">Antiviral defense</keyword>
<keyword id="KW-0963">Cytoplasm</keyword>
<keyword id="KW-0227">DNA damage</keyword>
<keyword id="KW-0234">DNA repair</keyword>
<keyword id="KW-0238">DNA-binding</keyword>
<keyword id="KW-0255">Endonuclease</keyword>
<keyword id="KW-0378">Hydrolase</keyword>
<keyword id="KW-0460">Magnesium</keyword>
<keyword id="KW-0479">Metal-binding</keyword>
<keyword id="KW-0540">Nuclease</keyword>
<keyword id="KW-1185">Reference proteome</keyword>
<sequence>MTWLPLNPIPLKDRVSMIFLQYGQIDVIDGAFVLIDKTGIRTHIPVGSVACIMLEPGTRVSHAAVRLAAQVGTLLVWVGEAGVRVYASGQPGGARSDKLLYQAKLALDEDLRLKVVRKMFELRFGEPAPARRSVEQLRGIEGSRVRATYALLAKQYGVTWNGRRYDPKDWEKGDTINQCISAATSCLYGVTEAAILAAGYAPAIGFVHTGKPLSFVYDIADIIKFDTVVPKAFEIARRNPGEPDREVRLACRDIFRSSKTLAKLIPLIEDVLAAGEIQPPAPPEDAQPVAIPLPVSLGDAGHRSS</sequence>
<gene>
    <name type="primary">ygbT</name>
    <name type="synonym">cas1</name>
    <name type="ordered locus">b2755</name>
    <name type="ordered locus">JW2725</name>
</gene>
<proteinExistence type="evidence at protein level"/>
<feature type="chain" id="PRO_0000169315" description="CRISPR-associated endonuclease Cas1">
    <location>
        <begin position="1"/>
        <end position="305"/>
    </location>
</feature>
<feature type="region of interest" description="Sufficient for cleavage of ssRNA, ssDNA and Holliday junction DNA">
    <location>
        <begin position="96"/>
        <end position="278"/>
    </location>
</feature>
<feature type="region of interest" description="Disordered" evidence="1">
    <location>
        <begin position="278"/>
        <end position="305"/>
    </location>
</feature>
<feature type="binding site" evidence="11 16">
    <location>
        <position position="141"/>
    </location>
    <ligand>
        <name>Mg(2+)</name>
        <dbReference type="ChEBI" id="CHEBI:18420"/>
    </ligand>
</feature>
<feature type="binding site" evidence="13">
    <location>
        <position position="208"/>
    </location>
    <ligand>
        <name>Mg(2+)</name>
        <dbReference type="ChEBI" id="CHEBI:18420"/>
    </ligand>
</feature>
<feature type="binding site" evidence="11 16">
    <location>
        <position position="221"/>
    </location>
    <ligand>
        <name>Mg(2+)</name>
        <dbReference type="ChEBI" id="CHEBI:18420"/>
    </ligand>
</feature>
<feature type="mutagenesis site" description="Slightly decreased spacer acquisition in vivo." evidence="10 11">
    <original>Y</original>
    <variation>A</variation>
    <location>
        <position position="22"/>
    </location>
</feature>
<feature type="mutagenesis site" description="Nearly wild-type spacer acquisition in vivo." evidence="11">
    <original>Y</original>
    <variation>F</variation>
    <location>
        <position position="22"/>
    </location>
</feature>
<feature type="mutagenesis site" description="Dramatically decreased spacer acquisition in vivo." evidence="11">
    <original>R</original>
    <variation>E</variation>
    <location>
        <position position="41"/>
    </location>
</feature>
<feature type="mutagenesis site" description="Loss of spacer acquisition in vivo, decreased protospacer binding." evidence="10">
    <original>R</original>
    <variation>A</variation>
    <location>
        <position position="59"/>
    </location>
</feature>
<feature type="mutagenesis site" description="Dramatically decreased spacer acquisition in vitro, 250-fold decreased affinity for protospacer DNA." evidence="11">
    <original>R</original>
    <variation>D</variation>
    <location>
        <position position="59"/>
    </location>
</feature>
<feature type="mutagenesis site" description="Dramatically decreased spacer acquisition in vitro, 250-fold decreased affinity for protospacer DNA." evidence="11">
    <original>R</original>
    <variation>D</variation>
    <location>
        <position position="66"/>
    </location>
</feature>
<feature type="mutagenesis site" description="Dramatically decreased spacer acquisition in vivo." evidence="11">
    <original>R</original>
    <variation>E</variation>
    <location>
        <position position="66"/>
    </location>
</feature>
<feature type="mutagenesis site" description="Decreased spacer acquisition in vivo." evidence="10">
    <original>R</original>
    <variation>A</variation>
    <location>
        <position position="84"/>
    </location>
</feature>
<feature type="mutagenesis site" description="Dramatically decreased spacer acquisition in vivo." evidence="11">
    <original>R</original>
    <variation>E</variation>
    <location>
        <position position="84"/>
    </location>
</feature>
<feature type="mutagenesis site" description="No cleavage of any substrates, no restoration of UV or mitomycin C (MMC) resistance (PubMed:21219465). Loss of spacer acquisition in vivo (PubMed:24793649)." evidence="4 6">
    <original>E</original>
    <variation>A</variation>
    <location>
        <position position="141"/>
    </location>
</feature>
<feature type="mutagenesis site" description="No effect on in vitro protospacer integration." evidence="8">
    <original>Y</original>
    <variation>A</variation>
    <location>
        <position position="149"/>
    </location>
</feature>
<feature type="mutagenesis site" description="No effect on in vitro protospacer integration (PubMed:25707795). Alone significantly decreased protospacer acquisition in vivo (PubMed:26478180). Loss of protospacer acquisition, decreased protospacer binding; in association with A-170, significantly decreased protospacer binding; in association with A-217 (PubMed:26478180)." evidence="8 10">
    <original>Y</original>
    <variation>A</variation>
    <location>
        <position position="165"/>
    </location>
</feature>
<feature type="mutagenesis site" description="Alone significantly decreased protospacer acquisition in vivo (PubMed:26478180). Decreased protospacer binding; in association with A-170 (PubMed:26478180)." evidence="10">
    <original>W</original>
    <variation>A</variation>
    <location>
        <position position="170"/>
    </location>
</feature>
<feature type="mutagenesis site" description="No cleavage of any substrates." evidence="4">
    <original>T</original>
    <variation>A</variation>
    <location>
        <position position="184"/>
    </location>
</feature>
<feature type="mutagenesis site" description="Partial inhibition of cleavage (PubMed:21219465). No effect on in vitro protospacer integration (PubMed:25707795). Significantly decreased protospacer acquisition in vivo (PubMed:26478180)." evidence="4 8 10">
    <original>Y</original>
    <variation>A</variation>
    <location>
        <position position="188"/>
    </location>
</feature>
<feature type="mutagenesis site" description="No cleavage of any substrates, no restoration of UV or MMC resistance (PubMed:21219465). Loss of spacer acquisition in vivo (PubMed:24793649, PubMed:25707795, PubMed:26478180)." evidence="4 6 8 10">
    <original>H</original>
    <variation>A</variation>
    <location>
        <position position="208"/>
    </location>
</feature>
<feature type="mutagenesis site" description="No cleavage of any substrates." evidence="4">
    <original>K</original>
    <variation>A</variation>
    <location>
        <position position="211"/>
    </location>
</feature>
<feature type="mutagenesis site" description="No effect on in vitro protospacer integration (PubMed:25707795). Alone significantly decreased protospacer acquisition in vivo (PubMed:26478180). Significantly decreased protospacer binding; in association with A-165 (PubMed:26478180)." evidence="8 10">
    <original>Y</original>
    <variation>A</variation>
    <location>
        <position position="217"/>
    </location>
</feature>
<feature type="mutagenesis site" description="No cleavage of any substrates, no restoration of UV or MMC resistance (PubMed:21219465). Loss of spacer acquisition in vivo (PubMed:24793649)." evidence="4 6">
    <original>D</original>
    <variation>A</variation>
    <location>
        <position position="218"/>
    </location>
</feature>
<feature type="mutagenesis site" description="No cleavage of any substrates (PubMed:21219465). Loss of spacer acquisition in vivo (PubMed:24793649, PubMed:24920831, PubMed:25707795). No cleavage of CRISPR leader in preparation for spacer integration (PubMed:24920831)." evidence="4 6 7 8">
    <original>D</original>
    <variation>A</variation>
    <location>
        <position position="221"/>
    </location>
</feature>
<feature type="mutagenesis site" description="No cleavage of any substrates (PubMed:21219465). Loss of spacer acquisition in vivo (PubMed:24793649, PubMed:25707795)." evidence="4 6 8">
    <original>K</original>
    <variation>A</variation>
    <location>
        <position position="224"/>
    </location>
</feature>
<feature type="mutagenesis site" description="Loss of spacer acquisition in vivo." evidence="10">
    <original>REVR</original>
    <variation>AEVA</variation>
    <location>
        <begin position="245"/>
        <end position="248"/>
    </location>
</feature>
<feature type="mutagenesis site" description="No effect on spacer acquisition." evidence="6">
    <original>R</original>
    <variation>A</variation>
    <location>
        <position position="245"/>
    </location>
</feature>
<feature type="mutagenesis site" description="Decreased spacer acquisition." evidence="6">
    <original>R</original>
    <variation>D</variation>
    <location>
        <position position="245"/>
    </location>
</feature>
<feature type="mutagenesis site" description="Dramatically decreased spacer acquisition in vivo." evidence="11">
    <original>R</original>
    <variation>E</variation>
    <location>
        <position position="245"/>
    </location>
</feature>
<feature type="mutagenesis site" description="Dramatically decreased spacer acquisition in vivo." evidence="11">
    <original>R</original>
    <variation>E</variation>
    <location>
        <position position="248"/>
    </location>
</feature>
<feature type="mutagenesis site" description="No effect on spacer acquisition." evidence="6">
    <original>R</original>
    <variation>A</variation>
    <location>
        <position position="252"/>
    </location>
</feature>
<feature type="mutagenesis site" description="Loss of spacer acquisition, no Cas1-Cas2 complex formation, loss of CRISPR DNA-binding by complex. Protein is stable and dimerizes." evidence="6">
    <original>R</original>
    <variation>E</variation>
    <location>
        <position position="252"/>
    </location>
</feature>
<feature type="mutagenesis site" description="Loss of spacer acquisition in vivo." evidence="10">
    <original>RSSK</original>
    <variation>ASSA</variation>
    <location>
        <begin position="256"/>
        <end position="259"/>
    </location>
</feature>
<feature type="mutagenesis site" description="No effect on spacer acquisition." evidence="6">
    <original>R</original>
    <variation>A</variation>
    <location>
        <position position="256"/>
    </location>
</feature>
<feature type="mutagenesis site" description="Loss of spacer acquisition." evidence="6">
    <original>R</original>
    <variation>E</variation>
    <location>
        <position position="256"/>
    </location>
</feature>
<feature type="mutagenesis site" description="No effect on spacer acquisition, Cas1-Cas2 complex formation or CRISPR DNA-binding by complex." evidence="6">
    <location>
        <begin position="282"/>
        <end position="305"/>
    </location>
</feature>
<feature type="mutagenesis site" description="No effect on spacer acquisition." evidence="6">
    <original>I</original>
    <variation>G</variation>
    <variation>R</variation>
    <location>
        <position position="291"/>
    </location>
</feature>
<feature type="helix" evidence="22">
    <location>
        <begin position="11"/>
        <end position="13"/>
    </location>
</feature>
<feature type="strand" evidence="18">
    <location>
        <begin position="17"/>
        <end position="20"/>
    </location>
</feature>
<feature type="strand" evidence="18">
    <location>
        <begin position="22"/>
        <end position="28"/>
    </location>
</feature>
<feature type="strand" evidence="18">
    <location>
        <begin position="31"/>
        <end position="36"/>
    </location>
</feature>
<feature type="strand" evidence="20">
    <location>
        <begin position="37"/>
        <end position="39"/>
    </location>
</feature>
<feature type="strand" evidence="18">
    <location>
        <begin position="41"/>
        <end position="43"/>
    </location>
</feature>
<feature type="helix" evidence="18">
    <location>
        <begin position="46"/>
        <end position="48"/>
    </location>
</feature>
<feature type="strand" evidence="18">
    <location>
        <begin position="50"/>
        <end position="54"/>
    </location>
</feature>
<feature type="strand" evidence="18">
    <location>
        <begin position="58"/>
        <end position="60"/>
    </location>
</feature>
<feature type="helix" evidence="18">
    <location>
        <begin position="62"/>
        <end position="70"/>
    </location>
</feature>
<feature type="strand" evidence="18">
    <location>
        <begin position="74"/>
        <end position="79"/>
    </location>
</feature>
<feature type="helix" evidence="18">
    <location>
        <begin position="80"/>
        <end position="82"/>
    </location>
</feature>
<feature type="strand" evidence="18">
    <location>
        <begin position="85"/>
        <end position="90"/>
    </location>
</feature>
<feature type="helix" evidence="19">
    <location>
        <begin position="95"/>
        <end position="107"/>
    </location>
</feature>
<feature type="helix" evidence="19">
    <location>
        <begin position="109"/>
        <end position="124"/>
    </location>
</feature>
<feature type="strand" evidence="21">
    <location>
        <begin position="130"/>
        <end position="132"/>
    </location>
</feature>
<feature type="helix" evidence="19">
    <location>
        <begin position="134"/>
        <end position="156"/>
    </location>
</feature>
<feature type="helix" evidence="24">
    <location>
        <begin position="167"/>
        <end position="169"/>
    </location>
</feature>
<feature type="helix" evidence="20">
    <location>
        <begin position="170"/>
        <end position="172"/>
    </location>
</feature>
<feature type="helix" evidence="19">
    <location>
        <begin position="175"/>
        <end position="197"/>
    </location>
</feature>
<feature type="strand" evidence="19">
    <location>
        <begin position="206"/>
        <end position="208"/>
    </location>
</feature>
<feature type="helix" evidence="19">
    <location>
        <begin position="214"/>
        <end position="223"/>
    </location>
</feature>
<feature type="turn" evidence="19">
    <location>
        <begin position="224"/>
        <end position="227"/>
    </location>
</feature>
<feature type="helix" evidence="19">
    <location>
        <begin position="228"/>
        <end position="238"/>
    </location>
</feature>
<feature type="helix" evidence="19">
    <location>
        <begin position="243"/>
        <end position="258"/>
    </location>
</feature>
<feature type="helix" evidence="19">
    <location>
        <begin position="260"/>
        <end position="273"/>
    </location>
</feature>
<feature type="strand" evidence="23">
    <location>
        <begin position="275"/>
        <end position="277"/>
    </location>
</feature>
<protein>
    <recommendedName>
        <fullName>CRISPR-associated endonuclease Cas1</fullName>
        <ecNumber>3.1.-.-</ecNumber>
    </recommendedName>
</protein>
<reference key="1">
    <citation type="journal article" date="1997" name="Science">
        <title>The complete genome sequence of Escherichia coli K-12.</title>
        <authorList>
            <person name="Blattner F.R."/>
            <person name="Plunkett G. III"/>
            <person name="Bloch C.A."/>
            <person name="Perna N.T."/>
            <person name="Burland V."/>
            <person name="Riley M."/>
            <person name="Collado-Vides J."/>
            <person name="Glasner J.D."/>
            <person name="Rode C.K."/>
            <person name="Mayhew G.F."/>
            <person name="Gregor J."/>
            <person name="Davis N.W."/>
            <person name="Kirkpatrick H.A."/>
            <person name="Goeden M.A."/>
            <person name="Rose D.J."/>
            <person name="Mau B."/>
            <person name="Shao Y."/>
        </authorList>
    </citation>
    <scope>NUCLEOTIDE SEQUENCE [LARGE SCALE GENOMIC DNA]</scope>
    <source>
        <strain>K12 / MG1655 / ATCC 47076</strain>
    </source>
</reference>
<reference key="2">
    <citation type="journal article" date="2006" name="Mol. Syst. Biol.">
        <title>Highly accurate genome sequences of Escherichia coli K-12 strains MG1655 and W3110.</title>
        <authorList>
            <person name="Hayashi K."/>
            <person name="Morooka N."/>
            <person name="Yamamoto Y."/>
            <person name="Fujita K."/>
            <person name="Isono K."/>
            <person name="Choi S."/>
            <person name="Ohtsubo E."/>
            <person name="Baba T."/>
            <person name="Wanner B.L."/>
            <person name="Mori H."/>
            <person name="Horiuchi T."/>
        </authorList>
    </citation>
    <scope>NUCLEOTIDE SEQUENCE [LARGE SCALE GENOMIC DNA]</scope>
    <source>
        <strain>K12 / W3110 / ATCC 27325 / DSM 5911</strain>
    </source>
</reference>
<reference key="3">
    <citation type="journal article" date="2009" name="J. Bacteriol.">
        <title>Involvement of the leucine response transcription factor LeuO in regulation of the genes for sulfa drug efflux.</title>
        <authorList>
            <person name="Shimada T."/>
            <person name="Yamamoto K."/>
            <person name="Ishihama A."/>
        </authorList>
    </citation>
    <scope>OPERON STRUCTURE</scope>
    <scope>INDUCTION BY LEUO</scope>
    <source>
        <strain>K12 / BW25113</strain>
    </source>
</reference>
<reference key="4">
    <citation type="journal article" date="2010" name="Mol. Microbiol.">
        <title>Identification and characterization of E. coli CRISPR-cas promoters and their silencing by H-NS.</title>
        <authorList>
            <person name="Pul U."/>
            <person name="Wurm R."/>
            <person name="Arslan Z."/>
            <person name="Geissen R."/>
            <person name="Hofmann N."/>
            <person name="Wagner R."/>
        </authorList>
    </citation>
    <scope>REPRESSION BY H-NS</scope>
    <source>
        <strain>K12</strain>
    </source>
</reference>
<reference key="5">
    <citation type="journal article" date="2011" name="Mol. Microbiol.">
        <title>Envelope stress is a trigger of CRISPR RNA-mediated DNA silencing in Escherichia coli.</title>
        <authorList>
            <person name="Perez-Rodriguez R."/>
            <person name="Haitjema C."/>
            <person name="Huang Q."/>
            <person name="Nam K.H."/>
            <person name="Bernardis S."/>
            <person name="Ke A."/>
            <person name="DeLisa M.P."/>
        </authorList>
    </citation>
    <scope>INDUCTION BY BAER</scope>
    <scope>ROLE IN PLASMID SILENCING</scope>
    <scope>DISRUPTION PHENOTYPE</scope>
    <source>
        <strain>K12 / BW25113</strain>
    </source>
</reference>
<reference key="6">
    <citation type="journal article" date="2014" name="Nucleic Acids Res.">
        <title>Detection and characterization of spacer integration intermediates in type I-E CRISPR-Cas system.</title>
        <authorList>
            <person name="Arslan Z."/>
            <person name="Hermanns V."/>
            <person name="Wurm R."/>
            <person name="Wagner R."/>
            <person name="Pul U."/>
        </authorList>
    </citation>
    <scope>FUNCTION AS A SPACER INTEGRASE</scope>
    <scope>SUBUNIT</scope>
    <scope>MUTAGENESIS OF ASP-221</scope>
    <source>
        <strain>K12 / MG1655 / ATCC 47076</strain>
    </source>
</reference>
<reference key="7">
    <citation type="journal article" date="2015" name="Nature">
        <title>Integrase-mediated spacer acquisition during CRISPR-Cas adaptive immunity.</title>
        <authorList>
            <person name="Nunez J.K."/>
            <person name="Lee A.S."/>
            <person name="Engelman A."/>
            <person name="Doudna J.A."/>
        </authorList>
    </citation>
    <scope>FUNCTION AS A SPACER INTEGRASE</scope>
    <scope>PROBABLE REACTION MECHANISM</scope>
    <scope>COFACTOR</scope>
    <scope>SUBUNIT</scope>
    <scope>MUTAGENESIS OF TYR-149; TYR-165; TYR-188; HIS-208; TYR-217; ASP-221 AND LYS-224</scope>
    <source>
        <strain>K12 / MG1655 / ATCC 47076</strain>
    </source>
</reference>
<reference key="8">
    <citation type="journal article" date="2015" name="Elife">
        <title>Intrinsic sequence specificity of the Cas1 integrase directs new spacer acquisition.</title>
        <authorList>
            <person name="Rollie C."/>
            <person name="Schneider S."/>
            <person name="Brinkmann A.S."/>
            <person name="Bolt E.L."/>
            <person name="White M.F."/>
        </authorList>
    </citation>
    <scope>FUNCTION</scope>
    <scope>COFACTOR</scope>
    <source>
        <strain>K12 / MG1655 / ATCC 47076</strain>
    </source>
</reference>
<reference key="9">
    <citation type="journal article" date="2011" name="Mol. Microbiol.">
        <title>A dual function of the CRISPR-Cas system in bacterial antivirus immunity and DNA repair.</title>
        <authorList>
            <person name="Babu M."/>
            <person name="Beloglazova N."/>
            <person name="Flick R."/>
            <person name="Graham C."/>
            <person name="Skarina T."/>
            <person name="Nocek B."/>
            <person name="Gagarinova A."/>
            <person name="Pogoutse O."/>
            <person name="Brown G."/>
            <person name="Binkowski A."/>
            <person name="Phanse S."/>
            <person name="Joachimiak A."/>
            <person name="Koonin E.V."/>
            <person name="Savchenko A."/>
            <person name="Emili A."/>
            <person name="Greenblatt J."/>
            <person name="Edwards A.M."/>
            <person name="Yakunin A.F."/>
        </authorList>
    </citation>
    <scope>X-RAY CRYSTALLOGRAPHY (1.95 ANGSTROMS)</scope>
    <scope>X-RAY CRYSTALLOGRAPHY (1.4 ANGSTROMS) OF 92-291</scope>
    <scope>FUNCTION AS AN ENDONUCLEASE</scope>
    <scope>COFACTOR</scope>
    <scope>ACTIVITY REGULATION</scope>
    <scope>SUBUNIT</scope>
    <scope>INTERACTION WITH RECB; RECC; RUVB; CASC AND CASE</scope>
    <scope>SUBCELLULAR LOCATION</scope>
    <scope>DISRUPTION PHENOTYPE</scope>
    <scope>MUTAGENESIS OF GLU-141; THR-184; TYR-188; HIS-208; LYS-211; ASP-218; ASP-221 AND LYS-224</scope>
    <source>
        <strain>K12</strain>
    </source>
</reference>
<reference key="10">
    <citation type="journal article" date="2014" name="Nat. Struct. Mol. Biol.">
        <title>Cas1-Cas2 complex formation mediates spacer acquisition during CRISPR-Cas adaptive immunity.</title>
        <authorList>
            <person name="Nunez J.K."/>
            <person name="Kranzusch P.J."/>
            <person name="Noeske J."/>
            <person name="Wright A.V."/>
            <person name="Davies C.W."/>
            <person name="Doudna J.A."/>
        </authorList>
    </citation>
    <scope>X-RAY CRYSTALLOGRAPHY (2.3 ANGSTROMS) IN COMPLEX WITH CAS2</scope>
    <scope>FUNCTION IN SPACER ACQUISITION</scope>
    <scope>INTERACTION WITH CAS2 (YGBF)</scope>
    <scope>SUBUNIT</scope>
    <scope>DNA-BINDING</scope>
    <scope>MUTAGENESIS OF GLU-141; HIS-208; ASP-218; ASP-221; LYS-224; ARG-245; ARG-252; ARG-256; 282-PRO--SER-305 AND ILE-291</scope>
    <source>
        <strain>K12 / MG1655 / ATCC 47076</strain>
    </source>
</reference>
<reference key="11">
    <citation type="submission" date="2014-05" db="PDB data bank">
        <title>Crystal structure of E.coli Cas1-Cas2 complex.</title>
        <authorList>
            <person name="Tamulaitiene G."/>
            <person name="Sinkunas T."/>
            <person name="Silanskas A."/>
            <person name="Gasiunas G."/>
            <person name="Grazulis S."/>
            <person name="Siksnys V."/>
        </authorList>
    </citation>
    <scope>X-RAY CRYSTALLOGRAPHY (2.70 ANGSTROMS) IN COMPLEX WITH CAS2</scope>
    <scope>SUBUNIT</scope>
</reference>
<reference key="12">
    <citation type="journal article" date="2015" name="Cell">
        <title>Structural and mechanistic basis of PAM-dependent spacer acquisition in CRISPR-Cas systems.</title>
        <authorList>
            <person name="Wang J."/>
            <person name="Li J."/>
            <person name="Zhao H."/>
            <person name="Sheng G."/>
            <person name="Wang M."/>
            <person name="Yin M."/>
            <person name="Wang Y."/>
        </authorList>
    </citation>
    <scope>X-RAY CRYSTALLOGRAPHY (2.60 ANGSTROMS) OF 2-281 IN COMPLEX WITH CAS2 AND DNA</scope>
    <scope>FUNCTION</scope>
    <scope>SUBUNIT</scope>
    <scope>DOMAIN</scope>
    <scope>DNA-BINDING</scope>
    <scope>MUTAGENESIS OF TYR-22; ARG-59; ARG-84; TYR-165; TRP-170; TYR-188; HIS-208; TYR-217; 245-ARG--ARG-248 AND 256-ARG--LYS-259</scope>
    <source>
        <strain>K12</strain>
    </source>
</reference>
<reference evidence="15 16 17" key="13">
    <citation type="journal article" date="2015" name="Nature">
        <title>Foreign DNA capture during CRISPR-Cas adaptive immunity.</title>
        <authorList>
            <person name="Nunez J.K."/>
            <person name="Harrington L.B."/>
            <person name="Kranzusch P.J."/>
            <person name="Engelman A.N."/>
            <person name="Doudna J.A."/>
        </authorList>
    </citation>
    <scope>X-RAY CRYSTALLOGRAPHY (2.95 ANGSTROMS) IN COMPLEX WITH MAGNESIUM; CAS2 AND DNA</scope>
    <scope>FUNCTION</scope>
    <scope>SUBUNIT</scope>
    <scope>DNA-BINDING</scope>
    <scope>MUTAGENESIS OF TYR-22; ARG-41; ARG-59; ARG-66; ARG-84; ARG-245 AND ARG-248</scope>
</reference>
<evidence type="ECO:0000256" key="1">
    <source>
        <dbReference type="SAM" id="MobiDB-lite"/>
    </source>
</evidence>
<evidence type="ECO:0000269" key="2">
    <source>
    </source>
</evidence>
<evidence type="ECO:0000269" key="3">
    <source>
    </source>
</evidence>
<evidence type="ECO:0000269" key="4">
    <source>
    </source>
</evidence>
<evidence type="ECO:0000269" key="5">
    <source>
    </source>
</evidence>
<evidence type="ECO:0000269" key="6">
    <source>
    </source>
</evidence>
<evidence type="ECO:0000269" key="7">
    <source>
    </source>
</evidence>
<evidence type="ECO:0000269" key="8">
    <source>
    </source>
</evidence>
<evidence type="ECO:0000269" key="9">
    <source>
    </source>
</evidence>
<evidence type="ECO:0000269" key="10">
    <source>
    </source>
</evidence>
<evidence type="ECO:0000269" key="11">
    <source>
    </source>
</evidence>
<evidence type="ECO:0000305" key="12"/>
<evidence type="ECO:0000305" key="13">
    <source>
    </source>
</evidence>
<evidence type="ECO:0000305" key="14">
    <source ref="11"/>
</evidence>
<evidence type="ECO:0007744" key="15">
    <source>
        <dbReference type="PDB" id="5DS4"/>
    </source>
</evidence>
<evidence type="ECO:0007744" key="16">
    <source>
        <dbReference type="PDB" id="5DS5"/>
    </source>
</evidence>
<evidence type="ECO:0007744" key="17">
    <source>
        <dbReference type="PDB" id="5DS6"/>
    </source>
</evidence>
<evidence type="ECO:0007829" key="18">
    <source>
        <dbReference type="PDB" id="3NKD"/>
    </source>
</evidence>
<evidence type="ECO:0007829" key="19">
    <source>
        <dbReference type="PDB" id="3NKE"/>
    </source>
</evidence>
<evidence type="ECO:0007829" key="20">
    <source>
        <dbReference type="PDB" id="4P6I"/>
    </source>
</evidence>
<evidence type="ECO:0007829" key="21">
    <source>
        <dbReference type="PDB" id="4QDL"/>
    </source>
</evidence>
<evidence type="ECO:0007829" key="22">
    <source>
        <dbReference type="PDB" id="5DLJ"/>
    </source>
</evidence>
<evidence type="ECO:0007829" key="23">
    <source>
        <dbReference type="PDB" id="5DQT"/>
    </source>
</evidence>
<evidence type="ECO:0007829" key="24">
    <source>
        <dbReference type="PDB" id="5DS5"/>
    </source>
</evidence>